<sequence>MKIIVPATSANIGPGFDSVGVAVTKYLQIEVCEERDEWLIEHQIGKWIPHDERNLLLKIALQIVPDLQPRRLKMTSDVPLARGLGSSSSVIVAGIELANQLGQLNLSDHEKLQLATKIEGHPDNVAPAIYGNLVIASSVEGQVSAIVADFPECDFLAYIPNYELRTRDSRSVLPKKLSYKEAVAASSIANVAVAALLAGDMVTAGQAIEGDLFHERYRQDLVREFAMIKQVTKENGAYATYLSGAGPTVMVLASHDKMPTIKAELEKQPFKGKLHDLRVDTQGVRVEAK</sequence>
<organism>
    <name type="scientific">Streptococcus pneumoniae serotype 4 (strain ATCC BAA-334 / TIGR4)</name>
    <dbReference type="NCBI Taxonomy" id="170187"/>
    <lineage>
        <taxon>Bacteria</taxon>
        <taxon>Bacillati</taxon>
        <taxon>Bacillota</taxon>
        <taxon>Bacilli</taxon>
        <taxon>Lactobacillales</taxon>
        <taxon>Streptococcaceae</taxon>
        <taxon>Streptococcus</taxon>
    </lineage>
</organism>
<gene>
    <name type="primary">thrB</name>
    <name type="ordered locus">SP_1360</name>
</gene>
<accession>P0A3L7</accession>
<accession>P72535</accession>
<comment type="function">
    <text evidence="1">Catalyzes the ATP-dependent phosphorylation of L-homoserine to L-homoserine phosphate.</text>
</comment>
<comment type="catalytic activity">
    <reaction>
        <text>L-homoserine + ATP = O-phospho-L-homoserine + ADP + H(+)</text>
        <dbReference type="Rhea" id="RHEA:13985"/>
        <dbReference type="ChEBI" id="CHEBI:15378"/>
        <dbReference type="ChEBI" id="CHEBI:30616"/>
        <dbReference type="ChEBI" id="CHEBI:57476"/>
        <dbReference type="ChEBI" id="CHEBI:57590"/>
        <dbReference type="ChEBI" id="CHEBI:456216"/>
        <dbReference type="EC" id="2.7.1.39"/>
    </reaction>
</comment>
<comment type="pathway">
    <text>Amino-acid biosynthesis; L-threonine biosynthesis; L-threonine from L-aspartate: step 4/5.</text>
</comment>
<comment type="subcellular location">
    <subcellularLocation>
        <location evidence="3">Cytoplasm</location>
    </subcellularLocation>
</comment>
<comment type="similarity">
    <text evidence="3">Belongs to the GHMP kinase family. Homoserine kinase subfamily.</text>
</comment>
<reference key="1">
    <citation type="journal article" date="2001" name="Science">
        <title>Complete genome sequence of a virulent isolate of Streptococcus pneumoniae.</title>
        <authorList>
            <person name="Tettelin H."/>
            <person name="Nelson K.E."/>
            <person name="Paulsen I.T."/>
            <person name="Eisen J.A."/>
            <person name="Read T.D."/>
            <person name="Peterson S.N."/>
            <person name="Heidelberg J.F."/>
            <person name="DeBoy R.T."/>
            <person name="Haft D.H."/>
            <person name="Dodson R.J."/>
            <person name="Durkin A.S."/>
            <person name="Gwinn M.L."/>
            <person name="Kolonay J.F."/>
            <person name="Nelson W.C."/>
            <person name="Peterson J.D."/>
            <person name="Umayam L.A."/>
            <person name="White O."/>
            <person name="Salzberg S.L."/>
            <person name="Lewis M.R."/>
            <person name="Radune D."/>
            <person name="Holtzapple E.K."/>
            <person name="Khouri H.M."/>
            <person name="Wolf A.M."/>
            <person name="Utterback T.R."/>
            <person name="Hansen C.L."/>
            <person name="McDonald L.A."/>
            <person name="Feldblyum T.V."/>
            <person name="Angiuoli S.V."/>
            <person name="Dickinson T."/>
            <person name="Hickey E.K."/>
            <person name="Holt I.E."/>
            <person name="Loftus B.J."/>
            <person name="Yang F."/>
            <person name="Smith H.O."/>
            <person name="Venter J.C."/>
            <person name="Dougherty B.A."/>
            <person name="Morrison D.A."/>
            <person name="Hollingshead S.K."/>
            <person name="Fraser C.M."/>
        </authorList>
    </citation>
    <scope>NUCLEOTIDE SEQUENCE [LARGE SCALE GENOMIC DNA]</scope>
    <source>
        <strain>ATCC BAA-334 / TIGR4</strain>
    </source>
</reference>
<protein>
    <recommendedName>
        <fullName>Homoserine kinase</fullName>
        <shortName>HK</shortName>
        <shortName>HSK</shortName>
        <ecNumber>2.7.1.39</ecNumber>
    </recommendedName>
</protein>
<keyword id="KW-0028">Amino-acid biosynthesis</keyword>
<keyword id="KW-0067">ATP-binding</keyword>
<keyword id="KW-0963">Cytoplasm</keyword>
<keyword id="KW-0418">Kinase</keyword>
<keyword id="KW-0547">Nucleotide-binding</keyword>
<keyword id="KW-1185">Reference proteome</keyword>
<keyword id="KW-0791">Threonine biosynthesis</keyword>
<keyword id="KW-0808">Transferase</keyword>
<proteinExistence type="inferred from homology"/>
<dbReference type="EC" id="2.7.1.39"/>
<dbReference type="EMBL" id="AE005672">
    <property type="protein sequence ID" value="AAK75458.1"/>
    <property type="molecule type" value="Genomic_DNA"/>
</dbReference>
<dbReference type="PIR" id="A95158">
    <property type="entry name" value="A95158"/>
</dbReference>
<dbReference type="RefSeq" id="WP_000692438.1">
    <property type="nucleotide sequence ID" value="NZ_CP155539.1"/>
</dbReference>
<dbReference type="SMR" id="P0A3L7"/>
<dbReference type="PaxDb" id="170187-SP_1360"/>
<dbReference type="EnsemblBacteria" id="AAK75458">
    <property type="protein sequence ID" value="AAK75458"/>
    <property type="gene ID" value="SP_1360"/>
</dbReference>
<dbReference type="GeneID" id="45653380"/>
<dbReference type="KEGG" id="spn:SP_1360"/>
<dbReference type="eggNOG" id="COG0083">
    <property type="taxonomic scope" value="Bacteria"/>
</dbReference>
<dbReference type="PhylomeDB" id="P0A3L7"/>
<dbReference type="BioCyc" id="SPNE170187:G1FZB-1368-MONOMER"/>
<dbReference type="UniPathway" id="UPA00050">
    <property type="reaction ID" value="UER00064"/>
</dbReference>
<dbReference type="Proteomes" id="UP000000585">
    <property type="component" value="Chromosome"/>
</dbReference>
<dbReference type="GO" id="GO:0005737">
    <property type="term" value="C:cytoplasm"/>
    <property type="evidence" value="ECO:0007669"/>
    <property type="project" value="UniProtKB-SubCell"/>
</dbReference>
<dbReference type="GO" id="GO:0005524">
    <property type="term" value="F:ATP binding"/>
    <property type="evidence" value="ECO:0007669"/>
    <property type="project" value="UniProtKB-UniRule"/>
</dbReference>
<dbReference type="GO" id="GO:0004413">
    <property type="term" value="F:homoserine kinase activity"/>
    <property type="evidence" value="ECO:0007669"/>
    <property type="project" value="UniProtKB-UniRule"/>
</dbReference>
<dbReference type="GO" id="GO:0009088">
    <property type="term" value="P:threonine biosynthetic process"/>
    <property type="evidence" value="ECO:0007669"/>
    <property type="project" value="UniProtKB-UniRule"/>
</dbReference>
<dbReference type="Gene3D" id="3.30.230.10">
    <property type="match status" value="1"/>
</dbReference>
<dbReference type="Gene3D" id="3.30.70.890">
    <property type="entry name" value="GHMP kinase, C-terminal domain"/>
    <property type="match status" value="1"/>
</dbReference>
<dbReference type="HAMAP" id="MF_00384">
    <property type="entry name" value="Homoser_kinase"/>
    <property type="match status" value="1"/>
</dbReference>
<dbReference type="InterPro" id="IPR013750">
    <property type="entry name" value="GHMP_kinase_C_dom"/>
</dbReference>
<dbReference type="InterPro" id="IPR036554">
    <property type="entry name" value="GHMP_kinase_C_sf"/>
</dbReference>
<dbReference type="InterPro" id="IPR006204">
    <property type="entry name" value="GHMP_kinase_N_dom"/>
</dbReference>
<dbReference type="InterPro" id="IPR006203">
    <property type="entry name" value="GHMP_knse_ATP-bd_CS"/>
</dbReference>
<dbReference type="InterPro" id="IPR000870">
    <property type="entry name" value="Homoserine_kinase"/>
</dbReference>
<dbReference type="InterPro" id="IPR020568">
    <property type="entry name" value="Ribosomal_Su5_D2-typ_SF"/>
</dbReference>
<dbReference type="InterPro" id="IPR014721">
    <property type="entry name" value="Ribsml_uS5_D2-typ_fold_subgr"/>
</dbReference>
<dbReference type="NCBIfam" id="TIGR00191">
    <property type="entry name" value="thrB"/>
    <property type="match status" value="1"/>
</dbReference>
<dbReference type="PANTHER" id="PTHR20861:SF1">
    <property type="entry name" value="HOMOSERINE KINASE"/>
    <property type="match status" value="1"/>
</dbReference>
<dbReference type="PANTHER" id="PTHR20861">
    <property type="entry name" value="HOMOSERINE/4-DIPHOSPHOCYTIDYL-2-C-METHYL-D-ERYTHRITOL KINASE"/>
    <property type="match status" value="1"/>
</dbReference>
<dbReference type="Pfam" id="PF08544">
    <property type="entry name" value="GHMP_kinases_C"/>
    <property type="match status" value="1"/>
</dbReference>
<dbReference type="Pfam" id="PF00288">
    <property type="entry name" value="GHMP_kinases_N"/>
    <property type="match status" value="1"/>
</dbReference>
<dbReference type="PIRSF" id="PIRSF000676">
    <property type="entry name" value="Homoser_kin"/>
    <property type="match status" value="1"/>
</dbReference>
<dbReference type="PRINTS" id="PR00958">
    <property type="entry name" value="HOMSERKINASE"/>
</dbReference>
<dbReference type="SUPFAM" id="SSF55060">
    <property type="entry name" value="GHMP Kinase, C-terminal domain"/>
    <property type="match status" value="1"/>
</dbReference>
<dbReference type="SUPFAM" id="SSF54211">
    <property type="entry name" value="Ribosomal protein S5 domain 2-like"/>
    <property type="match status" value="1"/>
</dbReference>
<dbReference type="PROSITE" id="PS00627">
    <property type="entry name" value="GHMP_KINASES_ATP"/>
    <property type="match status" value="1"/>
</dbReference>
<feature type="chain" id="PRO_0000156619" description="Homoserine kinase">
    <location>
        <begin position="1"/>
        <end position="289"/>
    </location>
</feature>
<feature type="binding site" evidence="2">
    <location>
        <begin position="79"/>
        <end position="89"/>
    </location>
    <ligand>
        <name>ATP</name>
        <dbReference type="ChEBI" id="CHEBI:30616"/>
    </ligand>
</feature>
<name>KHSE_STRPN</name>
<evidence type="ECO:0000250" key="1"/>
<evidence type="ECO:0000255" key="2"/>
<evidence type="ECO:0000305" key="3"/>